<evidence type="ECO:0000250" key="1"/>
<evidence type="ECO:0000256" key="2">
    <source>
        <dbReference type="SAM" id="MobiDB-lite"/>
    </source>
</evidence>
<evidence type="ECO:0000305" key="3"/>
<accession>Q6PAF6</accession>
<keyword id="KW-0963">Cytoplasm</keyword>
<keyword id="KW-0256">Endoplasmic reticulum</keyword>
<keyword id="KW-0433">Leucine-rich repeat</keyword>
<keyword id="KW-0539">Nucleus</keyword>
<keyword id="KW-0597">Phosphoprotein</keyword>
<keyword id="KW-1185">Reference proteome</keyword>
<keyword id="KW-0677">Repeat</keyword>
<feature type="chain" id="PRO_0000240186" description="Acidic leucine-rich nuclear phosphoprotein 32 family member A">
    <location>
        <begin position="1"/>
        <end position="244"/>
    </location>
</feature>
<feature type="repeat" description="LRR 1">
    <location>
        <begin position="18"/>
        <end position="41"/>
    </location>
</feature>
<feature type="repeat" description="LRR 2">
    <location>
        <begin position="43"/>
        <end position="64"/>
    </location>
</feature>
<feature type="repeat" description="LRR 3">
    <location>
        <begin position="65"/>
        <end position="87"/>
    </location>
</feature>
<feature type="repeat" description="LRR 4">
    <location>
        <begin position="89"/>
        <end position="110"/>
    </location>
</feature>
<feature type="domain" description="LRRCT">
    <location>
        <begin position="123"/>
        <end position="161"/>
    </location>
</feature>
<feature type="region of interest" description="Disordered" evidence="2">
    <location>
        <begin position="148"/>
        <end position="244"/>
    </location>
</feature>
<feature type="compositionally biased region" description="Acidic residues" evidence="2">
    <location>
        <begin position="157"/>
        <end position="227"/>
    </location>
</feature>
<organism>
    <name type="scientific">Xenopus laevis</name>
    <name type="common">African clawed frog</name>
    <dbReference type="NCBI Taxonomy" id="8355"/>
    <lineage>
        <taxon>Eukaryota</taxon>
        <taxon>Metazoa</taxon>
        <taxon>Chordata</taxon>
        <taxon>Craniata</taxon>
        <taxon>Vertebrata</taxon>
        <taxon>Euteleostomi</taxon>
        <taxon>Amphibia</taxon>
        <taxon>Batrachia</taxon>
        <taxon>Anura</taxon>
        <taxon>Pipoidea</taxon>
        <taxon>Pipidae</taxon>
        <taxon>Xenopodinae</taxon>
        <taxon>Xenopus</taxon>
        <taxon>Xenopus</taxon>
    </lineage>
</organism>
<gene>
    <name type="primary">anp32a</name>
</gene>
<protein>
    <recommendedName>
        <fullName>Acidic leucine-rich nuclear phosphoprotein 32 family member A</fullName>
    </recommendedName>
</protein>
<name>AN32A_XENLA</name>
<comment type="function">
    <text evidence="1">Implicated in a number of cellular processes, including proliferation, differentiation, caspase-dependent and caspase-independent apoptosis, suppression of transformation (tumor suppressor), inhibition of protein phosphatase 2A, regulation of mRNA trafficking and stability, and inhibition of acetyltransferases as part of the INHAT (inhibitor of histone acetyltransferases) complex.</text>
</comment>
<comment type="subcellular location">
    <subcellularLocation>
        <location evidence="1">Nucleus</location>
    </subcellularLocation>
    <subcellularLocation>
        <location evidence="1">Cytoplasm</location>
    </subcellularLocation>
    <subcellularLocation>
        <location evidence="1">Endoplasmic reticulum</location>
    </subcellularLocation>
</comment>
<comment type="PTM">
    <text evidence="1">Phosphorylated on serine residues.</text>
</comment>
<comment type="similarity">
    <text evidence="3">Belongs to the ANP32 family.</text>
</comment>
<proteinExistence type="evidence at transcript level"/>
<reference key="1">
    <citation type="submission" date="2003-10" db="EMBL/GenBank/DDBJ databases">
        <authorList>
            <consortium name="NIH - Xenopus Gene Collection (XGC) project"/>
        </authorList>
    </citation>
    <scope>NUCLEOTIDE SEQUENCE [LARGE SCALE MRNA]</scope>
    <source>
        <tissue>Lung</tissue>
    </source>
</reference>
<reference key="2">
    <citation type="journal article" date="2005" name="Cerebellum">
        <title>The Anp32 family of proteins containing leucine-rich repeats.</title>
        <authorList>
            <person name="Matilla A."/>
            <person name="Radrizzani M."/>
        </authorList>
    </citation>
    <scope>GENE FAMILY</scope>
    <scope>NOMENCLATURE</scope>
</reference>
<sequence>MDMKKRIHLELRNRTPADVKELVLDNCRSKEGKIEGLTDEFEGLEFLSTINVCLSSIANLPKLNKLKKLELSDNNISGGLEVLAEKCPNLTHLNLSGNRIKDLSTIEPLKKLEHLKSLDLFNCEVTNLNDYRENLFKLLPQLTYLDGYDRDDKEAPDSDAEGYVEGLDDDEDDEDEDDYDEDVPPGEEGEDDDDEEEGEEEEVSGEEEEDEDASREGEEDEGDEEAEHGEKRKRDQDDEGEDDD</sequence>
<dbReference type="EMBL" id="BC060336">
    <property type="protein sequence ID" value="AAH60336.1"/>
    <property type="molecule type" value="mRNA"/>
</dbReference>
<dbReference type="RefSeq" id="NP_001083156.1">
    <property type="nucleotide sequence ID" value="NM_001089687.1"/>
</dbReference>
<dbReference type="SMR" id="Q6PAF6"/>
<dbReference type="IntAct" id="Q6PAF6">
    <property type="interactions" value="1"/>
</dbReference>
<dbReference type="DNASU" id="398775"/>
<dbReference type="GeneID" id="398775"/>
<dbReference type="KEGG" id="xla:398775"/>
<dbReference type="AGR" id="Xenbase:XB-GENE-982555"/>
<dbReference type="CTD" id="398775"/>
<dbReference type="Xenbase" id="XB-GENE-982555">
    <property type="gene designation" value="anp32a.L"/>
</dbReference>
<dbReference type="OMA" id="VTNENAY"/>
<dbReference type="OrthoDB" id="2160613at2759"/>
<dbReference type="Proteomes" id="UP000186698">
    <property type="component" value="Chromosome 3L"/>
</dbReference>
<dbReference type="Bgee" id="398775">
    <property type="expression patterns" value="Expressed in lung and 19 other cell types or tissues"/>
</dbReference>
<dbReference type="GO" id="GO:0005737">
    <property type="term" value="C:cytoplasm"/>
    <property type="evidence" value="ECO:0000250"/>
    <property type="project" value="UniProtKB"/>
</dbReference>
<dbReference type="GO" id="GO:0005783">
    <property type="term" value="C:endoplasmic reticulum"/>
    <property type="evidence" value="ECO:0000250"/>
    <property type="project" value="UniProtKB"/>
</dbReference>
<dbReference type="GO" id="GO:0005634">
    <property type="term" value="C:nucleus"/>
    <property type="evidence" value="ECO:0000250"/>
    <property type="project" value="UniProtKB"/>
</dbReference>
<dbReference type="GO" id="GO:0048471">
    <property type="term" value="C:perinuclear region of cytoplasm"/>
    <property type="evidence" value="ECO:0000250"/>
    <property type="project" value="UniProtKB"/>
</dbReference>
<dbReference type="GO" id="GO:0042393">
    <property type="term" value="F:histone binding"/>
    <property type="evidence" value="ECO:0000318"/>
    <property type="project" value="GO_Central"/>
</dbReference>
<dbReference type="GO" id="GO:0006913">
    <property type="term" value="P:nucleocytoplasmic transport"/>
    <property type="evidence" value="ECO:0000250"/>
    <property type="project" value="UniProtKB"/>
</dbReference>
<dbReference type="GO" id="GO:0042981">
    <property type="term" value="P:regulation of apoptotic process"/>
    <property type="evidence" value="ECO:0000318"/>
    <property type="project" value="GO_Central"/>
</dbReference>
<dbReference type="FunFam" id="3.80.10.10:FF:000003">
    <property type="entry name" value="Acidic leucine-rich nuclear phosphoprotein 32 family member A"/>
    <property type="match status" value="1"/>
</dbReference>
<dbReference type="Gene3D" id="3.80.10.10">
    <property type="entry name" value="Ribonuclease Inhibitor"/>
    <property type="match status" value="1"/>
</dbReference>
<dbReference type="InterPro" id="IPR045081">
    <property type="entry name" value="AN32"/>
</dbReference>
<dbReference type="InterPro" id="IPR001611">
    <property type="entry name" value="Leu-rich_rpt"/>
</dbReference>
<dbReference type="InterPro" id="IPR032675">
    <property type="entry name" value="LRR_dom_sf"/>
</dbReference>
<dbReference type="PANTHER" id="PTHR11375">
    <property type="entry name" value="ACIDIC LEUCINE-RICH NUCLEAR PHOSPHOPROTEIN 32"/>
    <property type="match status" value="1"/>
</dbReference>
<dbReference type="PANTHER" id="PTHR11375:SF1">
    <property type="entry name" value="ACIDIC LEUCINE-RICH NUCLEAR PHOSPHOPROTEIN 32 FAMILY MEMBER A"/>
    <property type="match status" value="1"/>
</dbReference>
<dbReference type="Pfam" id="PF14580">
    <property type="entry name" value="LRR_9"/>
    <property type="match status" value="1"/>
</dbReference>
<dbReference type="SUPFAM" id="SSF52058">
    <property type="entry name" value="L domain-like"/>
    <property type="match status" value="1"/>
</dbReference>
<dbReference type="PROSITE" id="PS51450">
    <property type="entry name" value="LRR"/>
    <property type="match status" value="4"/>
</dbReference>